<name>EX7S_XANOP</name>
<protein>
    <recommendedName>
        <fullName evidence="1">Exodeoxyribonuclease 7 small subunit</fullName>
        <ecNumber evidence="1">3.1.11.6</ecNumber>
    </recommendedName>
    <alternativeName>
        <fullName evidence="1">Exodeoxyribonuclease VII small subunit</fullName>
        <shortName evidence="1">Exonuclease VII small subunit</shortName>
    </alternativeName>
</protein>
<dbReference type="EC" id="3.1.11.6" evidence="1"/>
<dbReference type="EMBL" id="CP000967">
    <property type="protein sequence ID" value="ACD60158.1"/>
    <property type="molecule type" value="Genomic_DNA"/>
</dbReference>
<dbReference type="RefSeq" id="WP_011259802.1">
    <property type="nucleotide sequence ID" value="NC_010717.2"/>
</dbReference>
<dbReference type="SMR" id="B2SWE7"/>
<dbReference type="KEGG" id="xop:PXO_01898"/>
<dbReference type="eggNOG" id="COG1722">
    <property type="taxonomic scope" value="Bacteria"/>
</dbReference>
<dbReference type="HOGENOM" id="CLU_145918_3_3_6"/>
<dbReference type="Proteomes" id="UP000001740">
    <property type="component" value="Chromosome"/>
</dbReference>
<dbReference type="GO" id="GO:0005829">
    <property type="term" value="C:cytosol"/>
    <property type="evidence" value="ECO:0007669"/>
    <property type="project" value="TreeGrafter"/>
</dbReference>
<dbReference type="GO" id="GO:0009318">
    <property type="term" value="C:exodeoxyribonuclease VII complex"/>
    <property type="evidence" value="ECO:0007669"/>
    <property type="project" value="InterPro"/>
</dbReference>
<dbReference type="GO" id="GO:0008855">
    <property type="term" value="F:exodeoxyribonuclease VII activity"/>
    <property type="evidence" value="ECO:0007669"/>
    <property type="project" value="UniProtKB-UniRule"/>
</dbReference>
<dbReference type="GO" id="GO:0006308">
    <property type="term" value="P:DNA catabolic process"/>
    <property type="evidence" value="ECO:0007669"/>
    <property type="project" value="UniProtKB-UniRule"/>
</dbReference>
<dbReference type="FunFam" id="1.10.287.1040:FF:000005">
    <property type="entry name" value="Exodeoxyribonuclease 7 small subunit"/>
    <property type="match status" value="1"/>
</dbReference>
<dbReference type="Gene3D" id="1.10.287.1040">
    <property type="entry name" value="Exonuclease VII, small subunit"/>
    <property type="match status" value="1"/>
</dbReference>
<dbReference type="HAMAP" id="MF_00337">
    <property type="entry name" value="Exonuc_7_S"/>
    <property type="match status" value="1"/>
</dbReference>
<dbReference type="InterPro" id="IPR003761">
    <property type="entry name" value="Exonuc_VII_S"/>
</dbReference>
<dbReference type="InterPro" id="IPR037004">
    <property type="entry name" value="Exonuc_VII_ssu_sf"/>
</dbReference>
<dbReference type="NCBIfam" id="NF002140">
    <property type="entry name" value="PRK00977.1-4"/>
    <property type="match status" value="1"/>
</dbReference>
<dbReference type="NCBIfam" id="TIGR01280">
    <property type="entry name" value="xseB"/>
    <property type="match status" value="1"/>
</dbReference>
<dbReference type="PANTHER" id="PTHR34137">
    <property type="entry name" value="EXODEOXYRIBONUCLEASE 7 SMALL SUBUNIT"/>
    <property type="match status" value="1"/>
</dbReference>
<dbReference type="PANTHER" id="PTHR34137:SF1">
    <property type="entry name" value="EXODEOXYRIBONUCLEASE 7 SMALL SUBUNIT"/>
    <property type="match status" value="1"/>
</dbReference>
<dbReference type="Pfam" id="PF02609">
    <property type="entry name" value="Exonuc_VII_S"/>
    <property type="match status" value="1"/>
</dbReference>
<dbReference type="SUPFAM" id="SSF116842">
    <property type="entry name" value="XseB-like"/>
    <property type="match status" value="1"/>
</dbReference>
<comment type="function">
    <text evidence="1">Bidirectionally degrades single-stranded DNA into large acid-insoluble oligonucleotides, which are then degraded further into small acid-soluble oligonucleotides.</text>
</comment>
<comment type="catalytic activity">
    <reaction evidence="1">
        <text>Exonucleolytic cleavage in either 5'- to 3'- or 3'- to 5'-direction to yield nucleoside 5'-phosphates.</text>
        <dbReference type="EC" id="3.1.11.6"/>
    </reaction>
</comment>
<comment type="subunit">
    <text evidence="1">Heterooligomer composed of large and small subunits.</text>
</comment>
<comment type="subcellular location">
    <subcellularLocation>
        <location evidence="1">Cytoplasm</location>
    </subcellularLocation>
</comment>
<comment type="similarity">
    <text evidence="1">Belongs to the XseB family.</text>
</comment>
<accession>B2SWE7</accession>
<feature type="chain" id="PRO_1000119969" description="Exodeoxyribonuclease 7 small subunit">
    <location>
        <begin position="1"/>
        <end position="86"/>
    </location>
</feature>
<evidence type="ECO:0000255" key="1">
    <source>
        <dbReference type="HAMAP-Rule" id="MF_00337"/>
    </source>
</evidence>
<gene>
    <name evidence="1" type="primary">xseB</name>
    <name type="ordered locus">PXO_01898</name>
</gene>
<reference key="1">
    <citation type="journal article" date="2008" name="BMC Genomics">
        <title>Genome sequence and rapid evolution of the rice pathogen Xanthomonas oryzae pv. oryzae PXO99A.</title>
        <authorList>
            <person name="Salzberg S.L."/>
            <person name="Sommer D.D."/>
            <person name="Schatz M.C."/>
            <person name="Phillippy A.M."/>
            <person name="Rabinowicz P.D."/>
            <person name="Tsuge S."/>
            <person name="Furutani A."/>
            <person name="Ochiai H."/>
            <person name="Delcher A.L."/>
            <person name="Kelley D."/>
            <person name="Madupu R."/>
            <person name="Puiu D."/>
            <person name="Radune D."/>
            <person name="Shumway M."/>
            <person name="Trapnell C."/>
            <person name="Aparna G."/>
            <person name="Jha G."/>
            <person name="Pandey A."/>
            <person name="Patil P.B."/>
            <person name="Ishihara H."/>
            <person name="Meyer D.F."/>
            <person name="Szurek B."/>
            <person name="Verdier V."/>
            <person name="Koebnik R."/>
            <person name="Dow J.M."/>
            <person name="Ryan R.P."/>
            <person name="Hirata H."/>
            <person name="Tsuyumu S."/>
            <person name="Won Lee S."/>
            <person name="Seo Y.-S."/>
            <person name="Sriariyanum M."/>
            <person name="Ronald P.C."/>
            <person name="Sonti R.V."/>
            <person name="Van Sluys M.-A."/>
            <person name="Leach J.E."/>
            <person name="White F.F."/>
            <person name="Bogdanove A.J."/>
        </authorList>
    </citation>
    <scope>NUCLEOTIDE SEQUENCE [LARGE SCALE GENOMIC DNA]</scope>
    <source>
        <strain>PXO99A</strain>
    </source>
</reference>
<sequence>MAKKSLNETSPVARFEQSLEELEQLVQKMEVGDLSLEQSLTAYERGIGLYRDCQQALEQAELRVRLLTDPARPELAQAFEPPSLDG</sequence>
<keyword id="KW-0963">Cytoplasm</keyword>
<keyword id="KW-0269">Exonuclease</keyword>
<keyword id="KW-0378">Hydrolase</keyword>
<keyword id="KW-0540">Nuclease</keyword>
<organism>
    <name type="scientific">Xanthomonas oryzae pv. oryzae (strain PXO99A)</name>
    <dbReference type="NCBI Taxonomy" id="360094"/>
    <lineage>
        <taxon>Bacteria</taxon>
        <taxon>Pseudomonadati</taxon>
        <taxon>Pseudomonadota</taxon>
        <taxon>Gammaproteobacteria</taxon>
        <taxon>Lysobacterales</taxon>
        <taxon>Lysobacteraceae</taxon>
        <taxon>Xanthomonas</taxon>
    </lineage>
</organism>
<proteinExistence type="inferred from homology"/>